<accession>A3N054</accession>
<comment type="function">
    <text evidence="1">Catalyzes the cyclization of GTP to (8S)-3',8-cyclo-7,8-dihydroguanosine 5'-triphosphate.</text>
</comment>
<comment type="catalytic activity">
    <reaction evidence="1">
        <text>GTP + AH2 + S-adenosyl-L-methionine = (8S)-3',8-cyclo-7,8-dihydroguanosine 5'-triphosphate + 5'-deoxyadenosine + L-methionine + A + H(+)</text>
        <dbReference type="Rhea" id="RHEA:49576"/>
        <dbReference type="ChEBI" id="CHEBI:13193"/>
        <dbReference type="ChEBI" id="CHEBI:15378"/>
        <dbReference type="ChEBI" id="CHEBI:17319"/>
        <dbReference type="ChEBI" id="CHEBI:17499"/>
        <dbReference type="ChEBI" id="CHEBI:37565"/>
        <dbReference type="ChEBI" id="CHEBI:57844"/>
        <dbReference type="ChEBI" id="CHEBI:59789"/>
        <dbReference type="ChEBI" id="CHEBI:131766"/>
        <dbReference type="EC" id="4.1.99.22"/>
    </reaction>
</comment>
<comment type="cofactor">
    <cofactor evidence="1">
        <name>[4Fe-4S] cluster</name>
        <dbReference type="ChEBI" id="CHEBI:49883"/>
    </cofactor>
    <text evidence="1">Binds 2 [4Fe-4S] clusters. Binds 1 [4Fe-4S] cluster coordinated with 3 cysteines and an exchangeable S-adenosyl-L-methionine and 1 [4Fe-4S] cluster coordinated with 3 cysteines and the GTP-derived substrate.</text>
</comment>
<comment type="pathway">
    <text evidence="1">Cofactor biosynthesis; molybdopterin biosynthesis.</text>
</comment>
<comment type="subunit">
    <text evidence="1">Monomer and homodimer.</text>
</comment>
<comment type="similarity">
    <text evidence="1">Belongs to the radical SAM superfamily. MoaA family.</text>
</comment>
<dbReference type="EC" id="4.1.99.22" evidence="1"/>
<dbReference type="EMBL" id="CP000569">
    <property type="protein sequence ID" value="ABN73790.1"/>
    <property type="molecule type" value="Genomic_DNA"/>
</dbReference>
<dbReference type="RefSeq" id="WP_005614948.1">
    <property type="nucleotide sequence ID" value="NC_009053.1"/>
</dbReference>
<dbReference type="SMR" id="A3N054"/>
<dbReference type="STRING" id="416269.APL_0690"/>
<dbReference type="EnsemblBacteria" id="ABN73790">
    <property type="protein sequence ID" value="ABN73790"/>
    <property type="gene ID" value="APL_0690"/>
</dbReference>
<dbReference type="KEGG" id="apl:APL_0690"/>
<dbReference type="eggNOG" id="COG2896">
    <property type="taxonomic scope" value="Bacteria"/>
</dbReference>
<dbReference type="HOGENOM" id="CLU_009273_0_1_6"/>
<dbReference type="UniPathway" id="UPA00344"/>
<dbReference type="Proteomes" id="UP000001432">
    <property type="component" value="Chromosome"/>
</dbReference>
<dbReference type="GO" id="GO:0051539">
    <property type="term" value="F:4 iron, 4 sulfur cluster binding"/>
    <property type="evidence" value="ECO:0007669"/>
    <property type="project" value="UniProtKB-UniRule"/>
</dbReference>
<dbReference type="GO" id="GO:0061799">
    <property type="term" value="F:cyclic pyranopterin monophosphate synthase activity"/>
    <property type="evidence" value="ECO:0007669"/>
    <property type="project" value="TreeGrafter"/>
</dbReference>
<dbReference type="GO" id="GO:0061798">
    <property type="term" value="F:GTP 3',8'-cyclase activity"/>
    <property type="evidence" value="ECO:0007669"/>
    <property type="project" value="UniProtKB-UniRule"/>
</dbReference>
<dbReference type="GO" id="GO:0005525">
    <property type="term" value="F:GTP binding"/>
    <property type="evidence" value="ECO:0007669"/>
    <property type="project" value="UniProtKB-UniRule"/>
</dbReference>
<dbReference type="GO" id="GO:0046872">
    <property type="term" value="F:metal ion binding"/>
    <property type="evidence" value="ECO:0007669"/>
    <property type="project" value="UniProtKB-KW"/>
</dbReference>
<dbReference type="GO" id="GO:1904047">
    <property type="term" value="F:S-adenosyl-L-methionine binding"/>
    <property type="evidence" value="ECO:0007669"/>
    <property type="project" value="UniProtKB-UniRule"/>
</dbReference>
<dbReference type="GO" id="GO:0006777">
    <property type="term" value="P:Mo-molybdopterin cofactor biosynthetic process"/>
    <property type="evidence" value="ECO:0007669"/>
    <property type="project" value="UniProtKB-UniRule"/>
</dbReference>
<dbReference type="CDD" id="cd01335">
    <property type="entry name" value="Radical_SAM"/>
    <property type="match status" value="1"/>
</dbReference>
<dbReference type="CDD" id="cd21117">
    <property type="entry name" value="Twitch_MoaA"/>
    <property type="match status" value="1"/>
</dbReference>
<dbReference type="FunFam" id="3.20.20.70:FF:000057">
    <property type="entry name" value="GTP 3',8-cyclase"/>
    <property type="match status" value="1"/>
</dbReference>
<dbReference type="Gene3D" id="3.20.20.70">
    <property type="entry name" value="Aldolase class I"/>
    <property type="match status" value="1"/>
</dbReference>
<dbReference type="HAMAP" id="MF_01225_B">
    <property type="entry name" value="MoaA_B"/>
    <property type="match status" value="1"/>
</dbReference>
<dbReference type="InterPro" id="IPR013785">
    <property type="entry name" value="Aldolase_TIM"/>
</dbReference>
<dbReference type="InterPro" id="IPR006638">
    <property type="entry name" value="Elp3/MiaA/NifB-like_rSAM"/>
</dbReference>
<dbReference type="InterPro" id="IPR013483">
    <property type="entry name" value="MoaA"/>
</dbReference>
<dbReference type="InterPro" id="IPR000385">
    <property type="entry name" value="MoaA_NifB_PqqE_Fe-S-bd_CS"/>
</dbReference>
<dbReference type="InterPro" id="IPR010505">
    <property type="entry name" value="MoaA_twitch"/>
</dbReference>
<dbReference type="InterPro" id="IPR050105">
    <property type="entry name" value="MoCo_biosynth_MoaA/MoaC"/>
</dbReference>
<dbReference type="InterPro" id="IPR007197">
    <property type="entry name" value="rSAM"/>
</dbReference>
<dbReference type="NCBIfam" id="TIGR02666">
    <property type="entry name" value="moaA"/>
    <property type="match status" value="1"/>
</dbReference>
<dbReference type="PANTHER" id="PTHR22960:SF28">
    <property type="entry name" value="GTP 3',8-CYCLASE"/>
    <property type="match status" value="1"/>
</dbReference>
<dbReference type="PANTHER" id="PTHR22960">
    <property type="entry name" value="MOLYBDOPTERIN COFACTOR SYNTHESIS PROTEIN A"/>
    <property type="match status" value="1"/>
</dbReference>
<dbReference type="Pfam" id="PF13353">
    <property type="entry name" value="Fer4_12"/>
    <property type="match status" value="1"/>
</dbReference>
<dbReference type="Pfam" id="PF06463">
    <property type="entry name" value="Mob_synth_C"/>
    <property type="match status" value="1"/>
</dbReference>
<dbReference type="Pfam" id="PF04055">
    <property type="entry name" value="Radical_SAM"/>
    <property type="match status" value="1"/>
</dbReference>
<dbReference type="SFLD" id="SFLDG01383">
    <property type="entry name" value="cyclic_pyranopterin_phosphate"/>
    <property type="match status" value="1"/>
</dbReference>
<dbReference type="SFLD" id="SFLDG01216">
    <property type="entry name" value="thioether_bond_formation_requi"/>
    <property type="match status" value="1"/>
</dbReference>
<dbReference type="SMART" id="SM00729">
    <property type="entry name" value="Elp3"/>
    <property type="match status" value="1"/>
</dbReference>
<dbReference type="SUPFAM" id="SSF102114">
    <property type="entry name" value="Radical SAM enzymes"/>
    <property type="match status" value="1"/>
</dbReference>
<dbReference type="PROSITE" id="PS01305">
    <property type="entry name" value="MOAA_NIFB_PQQE"/>
    <property type="match status" value="1"/>
</dbReference>
<dbReference type="PROSITE" id="PS51918">
    <property type="entry name" value="RADICAL_SAM"/>
    <property type="match status" value="1"/>
</dbReference>
<gene>
    <name evidence="1" type="primary">moaA</name>
    <name type="ordered locus">APL_0690</name>
</gene>
<proteinExistence type="inferred from homology"/>
<keyword id="KW-0004">4Fe-4S</keyword>
<keyword id="KW-0342">GTP-binding</keyword>
<keyword id="KW-0408">Iron</keyword>
<keyword id="KW-0411">Iron-sulfur</keyword>
<keyword id="KW-0456">Lyase</keyword>
<keyword id="KW-0479">Metal-binding</keyword>
<keyword id="KW-0501">Molybdenum cofactor biosynthesis</keyword>
<keyword id="KW-0547">Nucleotide-binding</keyword>
<keyword id="KW-1185">Reference proteome</keyword>
<keyword id="KW-0949">S-adenosyl-L-methionine</keyword>
<protein>
    <recommendedName>
        <fullName evidence="1">GTP 3',8-cyclase</fullName>
        <ecNumber evidence="1">4.1.99.22</ecNumber>
    </recommendedName>
    <alternativeName>
        <fullName evidence="1">Molybdenum cofactor biosynthesis protein A</fullName>
    </alternativeName>
</protein>
<feature type="chain" id="PRO_1000054170" description="GTP 3',8-cyclase">
    <location>
        <begin position="1"/>
        <end position="340"/>
    </location>
</feature>
<feature type="domain" description="Radical SAM core" evidence="2">
    <location>
        <begin position="20"/>
        <end position="246"/>
    </location>
</feature>
<feature type="binding site" evidence="1">
    <location>
        <position position="29"/>
    </location>
    <ligand>
        <name>GTP</name>
        <dbReference type="ChEBI" id="CHEBI:37565"/>
    </ligand>
</feature>
<feature type="binding site" evidence="1">
    <location>
        <position position="36"/>
    </location>
    <ligand>
        <name>[4Fe-4S] cluster</name>
        <dbReference type="ChEBI" id="CHEBI:49883"/>
        <label>1</label>
        <note>4Fe-4S-S-AdoMet</note>
    </ligand>
</feature>
<feature type="binding site" evidence="1">
    <location>
        <position position="40"/>
    </location>
    <ligand>
        <name>[4Fe-4S] cluster</name>
        <dbReference type="ChEBI" id="CHEBI:49883"/>
        <label>1</label>
        <note>4Fe-4S-S-AdoMet</note>
    </ligand>
</feature>
<feature type="binding site" evidence="1">
    <location>
        <position position="42"/>
    </location>
    <ligand>
        <name>S-adenosyl-L-methionine</name>
        <dbReference type="ChEBI" id="CHEBI:59789"/>
    </ligand>
</feature>
<feature type="binding site" evidence="1">
    <location>
        <position position="43"/>
    </location>
    <ligand>
        <name>[4Fe-4S] cluster</name>
        <dbReference type="ChEBI" id="CHEBI:49883"/>
        <label>1</label>
        <note>4Fe-4S-S-AdoMet</note>
    </ligand>
</feature>
<feature type="binding site" evidence="1">
    <location>
        <position position="79"/>
    </location>
    <ligand>
        <name>GTP</name>
        <dbReference type="ChEBI" id="CHEBI:37565"/>
    </ligand>
</feature>
<feature type="binding site" evidence="1">
    <location>
        <position position="83"/>
    </location>
    <ligand>
        <name>S-adenosyl-L-methionine</name>
        <dbReference type="ChEBI" id="CHEBI:59789"/>
    </ligand>
</feature>
<feature type="binding site" evidence="1">
    <location>
        <position position="110"/>
    </location>
    <ligand>
        <name>GTP</name>
        <dbReference type="ChEBI" id="CHEBI:37565"/>
    </ligand>
</feature>
<feature type="binding site" evidence="1">
    <location>
        <position position="134"/>
    </location>
    <ligand>
        <name>S-adenosyl-L-methionine</name>
        <dbReference type="ChEBI" id="CHEBI:59789"/>
    </ligand>
</feature>
<feature type="binding site" evidence="1">
    <location>
        <position position="171"/>
    </location>
    <ligand>
        <name>GTP</name>
        <dbReference type="ChEBI" id="CHEBI:37565"/>
    </ligand>
</feature>
<feature type="binding site" evidence="1">
    <location>
        <position position="205"/>
    </location>
    <ligand>
        <name>S-adenosyl-L-methionine</name>
        <dbReference type="ChEBI" id="CHEBI:59789"/>
    </ligand>
</feature>
<feature type="binding site" evidence="1">
    <location>
        <position position="268"/>
    </location>
    <ligand>
        <name>[4Fe-4S] cluster</name>
        <dbReference type="ChEBI" id="CHEBI:49883"/>
        <label>2</label>
        <note>4Fe-4S-substrate</note>
    </ligand>
</feature>
<feature type="binding site" evidence="1">
    <location>
        <position position="271"/>
    </location>
    <ligand>
        <name>[4Fe-4S] cluster</name>
        <dbReference type="ChEBI" id="CHEBI:49883"/>
        <label>2</label>
        <note>4Fe-4S-substrate</note>
    </ligand>
</feature>
<feature type="binding site" evidence="1">
    <location>
        <begin position="273"/>
        <end position="275"/>
    </location>
    <ligand>
        <name>GTP</name>
        <dbReference type="ChEBI" id="CHEBI:37565"/>
    </ligand>
</feature>
<feature type="binding site" evidence="1">
    <location>
        <position position="285"/>
    </location>
    <ligand>
        <name>[4Fe-4S] cluster</name>
        <dbReference type="ChEBI" id="CHEBI:49883"/>
        <label>2</label>
        <note>4Fe-4S-substrate</note>
    </ligand>
</feature>
<sequence>MQSIPIKHVGADNVSQLIDRFERQYVYLRLSVTDVCNFRCNYCLPDGYKPPSHRQQFLSISEIQRVVRAFADLGTEKVRITGGEPTLRKDFLEIAHTVSQTNGIKKVALTTNGYRMERDIDLWQQAGITDINVSVDSLDTRQFQLITGENKLQSILKGIDRAFEIGYRKIKVNAVLMKQYTAPELDKFLAWIKDKPIQMRFIELMETGEMDSFFKAQHLSGQSVMQRLLQEGWQLQPKALSDGPAKVLSHPDYQGEIGLIMPYEKNFCASCNRLRVSALGKLHLCLFGEEGIDLRDLLSEDTQQAQLKARLKAALQGKREHHYLHIGDSGIRNNLASIGG</sequence>
<evidence type="ECO:0000255" key="1">
    <source>
        <dbReference type="HAMAP-Rule" id="MF_01225"/>
    </source>
</evidence>
<evidence type="ECO:0000255" key="2">
    <source>
        <dbReference type="PROSITE-ProRule" id="PRU01266"/>
    </source>
</evidence>
<name>MOAA_ACTP2</name>
<reference key="1">
    <citation type="journal article" date="2008" name="J. Bacteriol.">
        <title>The complete genome sequence of Actinobacillus pleuropneumoniae L20 (serotype 5b).</title>
        <authorList>
            <person name="Foote S.J."/>
            <person name="Bosse J.T."/>
            <person name="Bouevitch A.B."/>
            <person name="Langford P.R."/>
            <person name="Young N.M."/>
            <person name="Nash J.H.E."/>
        </authorList>
    </citation>
    <scope>NUCLEOTIDE SEQUENCE [LARGE SCALE GENOMIC DNA]</scope>
    <source>
        <strain>L20</strain>
    </source>
</reference>
<organism>
    <name type="scientific">Actinobacillus pleuropneumoniae serotype 5b (strain L20)</name>
    <dbReference type="NCBI Taxonomy" id="416269"/>
    <lineage>
        <taxon>Bacteria</taxon>
        <taxon>Pseudomonadati</taxon>
        <taxon>Pseudomonadota</taxon>
        <taxon>Gammaproteobacteria</taxon>
        <taxon>Pasteurellales</taxon>
        <taxon>Pasteurellaceae</taxon>
        <taxon>Actinobacillus</taxon>
    </lineage>
</organism>